<keyword id="KW-1003">Cell membrane</keyword>
<keyword id="KW-0406">Ion transport</keyword>
<keyword id="KW-0464">Manganese</keyword>
<keyword id="KW-0472">Membrane</keyword>
<keyword id="KW-1185">Reference proteome</keyword>
<keyword id="KW-0812">Transmembrane</keyword>
<keyword id="KW-1133">Transmembrane helix</keyword>
<keyword id="KW-0813">Transport</keyword>
<organism>
    <name type="scientific">Acetivibrio thermocellus (strain ATCC 27405 / DSM 1237 / JCM 9322 / NBRC 103400 / NCIMB 10682 / NRRL B-4536 / VPI 7372)</name>
    <name type="common">Clostridium thermocellum</name>
    <dbReference type="NCBI Taxonomy" id="203119"/>
    <lineage>
        <taxon>Bacteria</taxon>
        <taxon>Bacillati</taxon>
        <taxon>Bacillota</taxon>
        <taxon>Clostridia</taxon>
        <taxon>Eubacteriales</taxon>
        <taxon>Oscillospiraceae</taxon>
        <taxon>Acetivibrio</taxon>
    </lineage>
</organism>
<feature type="chain" id="PRO_0000296922" description="Putative manganese efflux pump MntP">
    <location>
        <begin position="1"/>
        <end position="198"/>
    </location>
</feature>
<feature type="transmembrane region" description="Helical" evidence="1">
    <location>
        <begin position="3"/>
        <end position="23"/>
    </location>
</feature>
<feature type="transmembrane region" description="Helical" evidence="1">
    <location>
        <begin position="37"/>
        <end position="57"/>
    </location>
</feature>
<feature type="transmembrane region" description="Helical" evidence="1">
    <location>
        <begin position="65"/>
        <end position="85"/>
    </location>
</feature>
<feature type="transmembrane region" description="Helical" evidence="1">
    <location>
        <begin position="105"/>
        <end position="127"/>
    </location>
</feature>
<feature type="transmembrane region" description="Helical" evidence="1">
    <location>
        <begin position="131"/>
        <end position="153"/>
    </location>
</feature>
<feature type="transmembrane region" description="Helical" evidence="1">
    <location>
        <begin position="171"/>
        <end position="191"/>
    </location>
</feature>
<proteinExistence type="inferred from homology"/>
<gene>
    <name evidence="1" type="primary">mntP</name>
    <name type="ordered locus">Cthe_1420</name>
</gene>
<reference key="1">
    <citation type="submission" date="2007-02" db="EMBL/GenBank/DDBJ databases">
        <title>Complete sequence of Clostridium thermocellum ATCC 27405.</title>
        <authorList>
            <consortium name="US DOE Joint Genome Institute"/>
            <person name="Copeland A."/>
            <person name="Lucas S."/>
            <person name="Lapidus A."/>
            <person name="Barry K."/>
            <person name="Detter J.C."/>
            <person name="Glavina del Rio T."/>
            <person name="Hammon N."/>
            <person name="Israni S."/>
            <person name="Dalin E."/>
            <person name="Tice H."/>
            <person name="Pitluck S."/>
            <person name="Chertkov O."/>
            <person name="Brettin T."/>
            <person name="Bruce D."/>
            <person name="Han C."/>
            <person name="Tapia R."/>
            <person name="Gilna P."/>
            <person name="Schmutz J."/>
            <person name="Larimer F."/>
            <person name="Land M."/>
            <person name="Hauser L."/>
            <person name="Kyrpides N."/>
            <person name="Mikhailova N."/>
            <person name="Wu J.H.D."/>
            <person name="Newcomb M."/>
            <person name="Richardson P."/>
        </authorList>
    </citation>
    <scope>NUCLEOTIDE SEQUENCE [LARGE SCALE GENOMIC DNA]</scope>
    <source>
        <strain>ATCC 27405 / DSM 1237 / JCM 9322 / NBRC 103400 / NCIMB 10682 / NRRL B-4536 / VPI 7372</strain>
    </source>
</reference>
<accession>A3DFC2</accession>
<dbReference type="EMBL" id="CP000568">
    <property type="protein sequence ID" value="ABN52651.1"/>
    <property type="molecule type" value="Genomic_DNA"/>
</dbReference>
<dbReference type="RefSeq" id="WP_003518316.1">
    <property type="nucleotide sequence ID" value="NC_009012.1"/>
</dbReference>
<dbReference type="STRING" id="203119.Cthe_1420"/>
<dbReference type="GeneID" id="35806220"/>
<dbReference type="KEGG" id="cth:Cthe_1420"/>
<dbReference type="eggNOG" id="COG1971">
    <property type="taxonomic scope" value="Bacteria"/>
</dbReference>
<dbReference type="HOGENOM" id="CLU_096410_3_0_9"/>
<dbReference type="OrthoDB" id="9811590at2"/>
<dbReference type="Proteomes" id="UP000002145">
    <property type="component" value="Chromosome"/>
</dbReference>
<dbReference type="GO" id="GO:0005886">
    <property type="term" value="C:plasma membrane"/>
    <property type="evidence" value="ECO:0007669"/>
    <property type="project" value="UniProtKB-SubCell"/>
</dbReference>
<dbReference type="GO" id="GO:0005384">
    <property type="term" value="F:manganese ion transmembrane transporter activity"/>
    <property type="evidence" value="ECO:0007669"/>
    <property type="project" value="UniProtKB-UniRule"/>
</dbReference>
<dbReference type="HAMAP" id="MF_01521">
    <property type="entry name" value="MntP_pump"/>
    <property type="match status" value="1"/>
</dbReference>
<dbReference type="InterPro" id="IPR003810">
    <property type="entry name" value="Mntp/YtaF"/>
</dbReference>
<dbReference type="InterPro" id="IPR022929">
    <property type="entry name" value="Put_MntP"/>
</dbReference>
<dbReference type="PANTHER" id="PTHR35529">
    <property type="entry name" value="MANGANESE EFFLUX PUMP MNTP-RELATED"/>
    <property type="match status" value="1"/>
</dbReference>
<dbReference type="PANTHER" id="PTHR35529:SF1">
    <property type="entry name" value="MANGANESE EFFLUX PUMP MNTP-RELATED"/>
    <property type="match status" value="1"/>
</dbReference>
<dbReference type="Pfam" id="PF02659">
    <property type="entry name" value="Mntp"/>
    <property type="match status" value="1"/>
</dbReference>
<name>MNTP_ACET2</name>
<comment type="function">
    <text evidence="1">Probably functions as a manganese efflux pump.</text>
</comment>
<comment type="subcellular location">
    <subcellularLocation>
        <location evidence="1">Cell membrane</location>
        <topology evidence="1">Multi-pass membrane protein</topology>
    </subcellularLocation>
</comment>
<comment type="similarity">
    <text evidence="1">Belongs to the MntP (TC 9.B.29) family.</text>
</comment>
<protein>
    <recommendedName>
        <fullName evidence="1">Putative manganese efflux pump MntP</fullName>
    </recommendedName>
</protein>
<evidence type="ECO:0000255" key="1">
    <source>
        <dbReference type="HAMAP-Rule" id="MF_01521"/>
    </source>
</evidence>
<sequence>MSSIELLIIAVGLSMDAFAVAICKGLSMKKMSYRNAVLTGCFFGGFQALMPLLGYLLGTQFKDYITSIDHWIAFGLLSLIGINMIKESKNTCEITDEDDTFSLKSLTVMAFATSIDALAIGVTFAFLQVNIIPAVTMIGITTFTFSFLGVKIGNLFGVKFQSKAEIVGGLILIGMGCKILFDHLGVISFVFDSLNKFN</sequence>